<comment type="function">
    <text evidence="1">This protein is one of the early assembly proteins of the 50S ribosomal subunit, although it is not seen to bind rRNA by itself. It is important during the early stages of 50S assembly.</text>
</comment>
<comment type="subunit">
    <text evidence="1">Part of the 50S ribosomal subunit.</text>
</comment>
<comment type="similarity">
    <text evidence="1">Belongs to the universal ribosomal protein uL13 family.</text>
</comment>
<gene>
    <name evidence="1" type="primary">rplM</name>
    <name type="ordered locus">Ppro_3086</name>
</gene>
<accession>A1ATL1</accession>
<protein>
    <recommendedName>
        <fullName evidence="1">Large ribosomal subunit protein uL13</fullName>
    </recommendedName>
    <alternativeName>
        <fullName evidence="2">50S ribosomal protein L13</fullName>
    </alternativeName>
</protein>
<sequence length="142" mass="15781">MKTEVAKIENVKRDWYLVDAQEMVLGRLASQIANILRGKNKAIYTPSVDTGDFVIVVNAEKIALTGRKLADKSYYSHSGFPGGLKEISAGKLLEKKPEELIKRAVKGMLPKNKLSRHMLKKLKIYAGSSHPHDAQQPKVLAL</sequence>
<evidence type="ECO:0000255" key="1">
    <source>
        <dbReference type="HAMAP-Rule" id="MF_01366"/>
    </source>
</evidence>
<evidence type="ECO:0000305" key="2"/>
<reference key="1">
    <citation type="submission" date="2006-10" db="EMBL/GenBank/DDBJ databases">
        <title>Complete sequence of chromosome of Pelobacter propionicus DSM 2379.</title>
        <authorList>
            <consortium name="US DOE Joint Genome Institute"/>
            <person name="Copeland A."/>
            <person name="Lucas S."/>
            <person name="Lapidus A."/>
            <person name="Barry K."/>
            <person name="Detter J.C."/>
            <person name="Glavina del Rio T."/>
            <person name="Hammon N."/>
            <person name="Israni S."/>
            <person name="Dalin E."/>
            <person name="Tice H."/>
            <person name="Pitluck S."/>
            <person name="Saunders E."/>
            <person name="Brettin T."/>
            <person name="Bruce D."/>
            <person name="Han C."/>
            <person name="Tapia R."/>
            <person name="Schmutz J."/>
            <person name="Larimer F."/>
            <person name="Land M."/>
            <person name="Hauser L."/>
            <person name="Kyrpides N."/>
            <person name="Kim E."/>
            <person name="Lovley D."/>
            <person name="Richardson P."/>
        </authorList>
    </citation>
    <scope>NUCLEOTIDE SEQUENCE [LARGE SCALE GENOMIC DNA]</scope>
    <source>
        <strain>DSM 2379 / NBRC 103807 / OttBd1</strain>
    </source>
</reference>
<organism>
    <name type="scientific">Pelobacter propionicus (strain DSM 2379 / NBRC 103807 / OttBd1)</name>
    <dbReference type="NCBI Taxonomy" id="338966"/>
    <lineage>
        <taxon>Bacteria</taxon>
        <taxon>Pseudomonadati</taxon>
        <taxon>Thermodesulfobacteriota</taxon>
        <taxon>Desulfuromonadia</taxon>
        <taxon>Desulfuromonadales</taxon>
        <taxon>Desulfuromonadaceae</taxon>
        <taxon>Pelobacter</taxon>
    </lineage>
</organism>
<proteinExistence type="inferred from homology"/>
<keyword id="KW-1185">Reference proteome</keyword>
<keyword id="KW-0687">Ribonucleoprotein</keyword>
<keyword id="KW-0689">Ribosomal protein</keyword>
<feature type="chain" id="PRO_1000067995" description="Large ribosomal subunit protein uL13">
    <location>
        <begin position="1"/>
        <end position="142"/>
    </location>
</feature>
<dbReference type="EMBL" id="CP000482">
    <property type="protein sequence ID" value="ABL00682.1"/>
    <property type="molecule type" value="Genomic_DNA"/>
</dbReference>
<dbReference type="RefSeq" id="WP_011736914.1">
    <property type="nucleotide sequence ID" value="NC_008609.1"/>
</dbReference>
<dbReference type="SMR" id="A1ATL1"/>
<dbReference type="STRING" id="338966.Ppro_3086"/>
<dbReference type="KEGG" id="ppd:Ppro_3086"/>
<dbReference type="eggNOG" id="COG0102">
    <property type="taxonomic scope" value="Bacteria"/>
</dbReference>
<dbReference type="HOGENOM" id="CLU_082184_2_2_7"/>
<dbReference type="OrthoDB" id="9801330at2"/>
<dbReference type="Proteomes" id="UP000006732">
    <property type="component" value="Chromosome"/>
</dbReference>
<dbReference type="GO" id="GO:0022625">
    <property type="term" value="C:cytosolic large ribosomal subunit"/>
    <property type="evidence" value="ECO:0007669"/>
    <property type="project" value="TreeGrafter"/>
</dbReference>
<dbReference type="GO" id="GO:0003729">
    <property type="term" value="F:mRNA binding"/>
    <property type="evidence" value="ECO:0007669"/>
    <property type="project" value="TreeGrafter"/>
</dbReference>
<dbReference type="GO" id="GO:0003735">
    <property type="term" value="F:structural constituent of ribosome"/>
    <property type="evidence" value="ECO:0007669"/>
    <property type="project" value="InterPro"/>
</dbReference>
<dbReference type="GO" id="GO:0017148">
    <property type="term" value="P:negative regulation of translation"/>
    <property type="evidence" value="ECO:0007669"/>
    <property type="project" value="TreeGrafter"/>
</dbReference>
<dbReference type="GO" id="GO:0006412">
    <property type="term" value="P:translation"/>
    <property type="evidence" value="ECO:0007669"/>
    <property type="project" value="UniProtKB-UniRule"/>
</dbReference>
<dbReference type="CDD" id="cd00392">
    <property type="entry name" value="Ribosomal_L13"/>
    <property type="match status" value="1"/>
</dbReference>
<dbReference type="FunFam" id="3.90.1180.10:FF:000001">
    <property type="entry name" value="50S ribosomal protein L13"/>
    <property type="match status" value="1"/>
</dbReference>
<dbReference type="Gene3D" id="3.90.1180.10">
    <property type="entry name" value="Ribosomal protein L13"/>
    <property type="match status" value="1"/>
</dbReference>
<dbReference type="HAMAP" id="MF_01366">
    <property type="entry name" value="Ribosomal_uL13"/>
    <property type="match status" value="1"/>
</dbReference>
<dbReference type="InterPro" id="IPR005822">
    <property type="entry name" value="Ribosomal_uL13"/>
</dbReference>
<dbReference type="InterPro" id="IPR005823">
    <property type="entry name" value="Ribosomal_uL13_bac-type"/>
</dbReference>
<dbReference type="InterPro" id="IPR023563">
    <property type="entry name" value="Ribosomal_uL13_CS"/>
</dbReference>
<dbReference type="InterPro" id="IPR036899">
    <property type="entry name" value="Ribosomal_uL13_sf"/>
</dbReference>
<dbReference type="NCBIfam" id="TIGR01066">
    <property type="entry name" value="rplM_bact"/>
    <property type="match status" value="1"/>
</dbReference>
<dbReference type="PANTHER" id="PTHR11545:SF2">
    <property type="entry name" value="LARGE RIBOSOMAL SUBUNIT PROTEIN UL13M"/>
    <property type="match status" value="1"/>
</dbReference>
<dbReference type="PANTHER" id="PTHR11545">
    <property type="entry name" value="RIBOSOMAL PROTEIN L13"/>
    <property type="match status" value="1"/>
</dbReference>
<dbReference type="Pfam" id="PF00572">
    <property type="entry name" value="Ribosomal_L13"/>
    <property type="match status" value="1"/>
</dbReference>
<dbReference type="PIRSF" id="PIRSF002181">
    <property type="entry name" value="Ribosomal_L13"/>
    <property type="match status" value="1"/>
</dbReference>
<dbReference type="SUPFAM" id="SSF52161">
    <property type="entry name" value="Ribosomal protein L13"/>
    <property type="match status" value="1"/>
</dbReference>
<dbReference type="PROSITE" id="PS00783">
    <property type="entry name" value="RIBOSOMAL_L13"/>
    <property type="match status" value="1"/>
</dbReference>
<name>RL13_PELPD</name>